<feature type="signal peptide" evidence="1">
    <location>
        <begin position="1"/>
        <end position="16"/>
    </location>
</feature>
<feature type="propeptide" id="PRO_0000004988">
    <location>
        <begin position="17"/>
        <end position="70"/>
    </location>
</feature>
<feature type="chain" id="PRO_0000004989" description="Rhinocerosin">
    <location>
        <begin position="71"/>
        <end position="142"/>
    </location>
</feature>
<feature type="region of interest" description="Disordered" evidence="2">
    <location>
        <begin position="72"/>
        <end position="96"/>
    </location>
</feature>
<feature type="compositionally biased region" description="Polar residues" evidence="2">
    <location>
        <begin position="85"/>
        <end position="96"/>
    </location>
</feature>
<evidence type="ECO:0000255" key="1"/>
<evidence type="ECO:0000256" key="2">
    <source>
        <dbReference type="SAM" id="MobiDB-lite"/>
    </source>
</evidence>
<evidence type="ECO:0000305" key="3"/>
<sequence>MMKLYIVFGFIAFSAAYVVPEGYYEPEYYPADGYESERVARASPAELIFDEDLADEPEVEEPQYYIRTRRSLQPGAPNFPMPGSQLPTSITSNIEKQGPNTAATINAQHKTDRYDVGATWSKVIRGPGRSKPNWSIGGTYRW</sequence>
<protein>
    <recommendedName>
        <fullName>Rhinocerosin</fullName>
    </recommendedName>
</protein>
<accession>O76145</accession>
<name>RHIC_ORYRH</name>
<proteinExistence type="evidence at protein level"/>
<dbReference type="EMBL" id="AB010824">
    <property type="protein sequence ID" value="BAA31506.1"/>
    <property type="molecule type" value="mRNA"/>
</dbReference>
<dbReference type="GO" id="GO:0005576">
    <property type="term" value="C:extracellular region"/>
    <property type="evidence" value="ECO:0007669"/>
    <property type="project" value="UniProtKB-SubCell"/>
</dbReference>
<dbReference type="GO" id="GO:0042742">
    <property type="term" value="P:defense response to bacterium"/>
    <property type="evidence" value="ECO:0007669"/>
    <property type="project" value="UniProtKB-KW"/>
</dbReference>
<dbReference type="GO" id="GO:0045087">
    <property type="term" value="P:innate immune response"/>
    <property type="evidence" value="ECO:0007669"/>
    <property type="project" value="UniProtKB-KW"/>
</dbReference>
<dbReference type="InterPro" id="IPR009382">
    <property type="entry name" value="Coleoptericin"/>
</dbReference>
<dbReference type="Pfam" id="PF06286">
    <property type="entry name" value="Coleoptericin"/>
    <property type="match status" value="1"/>
</dbReference>
<reference key="1">
    <citation type="journal article" date="1998" name="Eur. J. Biochem.">
        <title>Isolation, cDNA cloning and gene expression of an antibacterial protein from larvae of the coconut rhinoceros beetle, Oryctes rhinoceros.</title>
        <authorList>
            <person name="Yang J."/>
            <person name="Yamamoto M."/>
            <person name="Ishibashi J."/>
            <person name="Taniai K."/>
            <person name="Yamakawa M."/>
        </authorList>
    </citation>
    <scope>NUCLEOTIDE SEQUENCE [MRNA]</scope>
    <scope>PARTIAL PROTEIN SEQUENCE</scope>
</reference>
<organism>
    <name type="scientific">Oryctes rhinoceros</name>
    <name type="common">Coconut rhinoceros beetle</name>
    <dbReference type="NCBI Taxonomy" id="72550"/>
    <lineage>
        <taxon>Eukaryota</taxon>
        <taxon>Metazoa</taxon>
        <taxon>Ecdysozoa</taxon>
        <taxon>Arthropoda</taxon>
        <taxon>Hexapoda</taxon>
        <taxon>Insecta</taxon>
        <taxon>Pterygota</taxon>
        <taxon>Neoptera</taxon>
        <taxon>Endopterygota</taxon>
        <taxon>Coleoptera</taxon>
        <taxon>Polyphaga</taxon>
        <taxon>Scarabaeiformia</taxon>
        <taxon>Scarabaeidae</taxon>
        <taxon>Dynastinae</taxon>
        <taxon>Oryctes</taxon>
    </lineage>
</organism>
<comment type="function">
    <text>Has strong antibacterial activity against E.coli, Streptococcus pyogenes, Staphylococcus aureus but not against Pseudomonas aeruginosa.</text>
</comment>
<comment type="subcellular location">
    <subcellularLocation>
        <location>Secreted</location>
    </subcellularLocation>
</comment>
<comment type="tissue specificity">
    <text>Strongly expressed in the fat body and the Malpighian tubules, and weakly expressed in hemocytes and midgut.</text>
</comment>
<comment type="similarity">
    <text evidence="3">Belongs to the coleoptericin family.</text>
</comment>
<keyword id="KW-0044">Antibiotic</keyword>
<keyword id="KW-0929">Antimicrobial</keyword>
<keyword id="KW-0165">Cleavage on pair of basic residues</keyword>
<keyword id="KW-0903">Direct protein sequencing</keyword>
<keyword id="KW-0391">Immunity</keyword>
<keyword id="KW-0399">Innate immunity</keyword>
<keyword id="KW-0964">Secreted</keyword>
<keyword id="KW-0732">Signal</keyword>